<reference key="1">
    <citation type="journal article" date="2005" name="J. Steroid Biochem. Mol. Biol.">
        <title>Full-length sequence and expression analysis of estrogen receptor alpha mRNA in feline mammary tumors.</title>
        <authorList>
            <person name="Cardazzo B."/>
            <person name="Zappulli V."/>
            <person name="Frassineti F."/>
            <person name="Patarnello T."/>
            <person name="Castagnaro M."/>
            <person name="Bargelloni L."/>
        </authorList>
    </citation>
    <scope>NUCLEOTIDE SEQUENCE [MRNA]</scope>
</reference>
<comment type="function">
    <text evidence="1 3">Nuclear hormone receptor. The steroid hormones and their receptors are involved in the regulation of eukaryotic gene expression and affect cellular proliferation and differentiation in target tissues. Ligand-dependent nuclear transactivation involves either direct homodimer binding to a palindromic estrogen response element (ERE) sequence or association with other DNA-binding transcription factors, such as AP-1/c-Jun, c-Fos, ATF-2, Sp1 and Sp3, to mediate ERE-independent signaling. Ligand binding induces a conformational change allowing subsequent or combinatorial association with multiprotein coactivator complexes through LXXLL motifs of their respective components. Mutual transrepression occurs between the estrogen receptor (ER) and NF-kappa-B in a cell-type specific manner. Decreases NF-kappa-B DNA-binding activity and inhibits NF-kappa-B-mediated transcription from the IL6 promoter and displace RELA/p65 and associated coregulators from the promoter. Recruited to the NF-kappa-B response element of the CCL2 and IL8 promoters and can displace CREBBP. Present with NF-kappa-B components RELA/p65 and NFKB1/p50 on ERE sequences. Can also act synergistically with NF-kappa-B to activate transcription involving respective recruitment adjacent response elements; the function involves CREBBP. Can activate the transcriptional activity of TFF1. Also mediates membrane-initiated estrogen signaling involving various kinase cascades. Essential for MTA1-mediated transcriptional regulation of BRCA1 and BCAS3 (By similarity). Maintains neuronal survival in response to ischemic reperfusion injury when in the presence of circulating estradiol (17-beta-estradiol/E2) (By similarity).</text>
</comment>
<comment type="subunit">
    <text evidence="2 3 4">Binds DNA as a homodimer. Can form a heterodimer with ESR2. Interacts with coactivator NCOA5. Interacts with PELP1, the interaction is enhanced by 17-beta-estradiol; the interaction increases ESR1 transcriptional activity (By similarity). Interacts with NCOA7; the interaction is ligand-inducible. Interacts with AKAP13, CUEDC2, HEXIM1, KDM5A, MAP1S, SMARD1, and UBE1C. Interacts with MUC1; the interaction is stimulated by 7 beta-estradiol (E2) and enhances ESR1-mediated transcription. Interacts with DNTTIP2, and UIMC1. Interacts with KMT2D/MLL2. Interacts with ATAD2; the interaction is enhanced by estradiol. Interacts with KIF18A and LDB1. Interacts with RLIM (via its C-terminus). Interacts with MACROD1. Interacts with SH2D4A and PLCG. Interacts with SH2D4A; the interaction blocks binding to PLCG and inhibits estrogen-induced cell proliferation. Interacts with DYNLL1. Interacts with CCDC62; the interaction requires estradiol and appears to enhance the transcription of target genes. Interacts with NR2C1; the interaction prevents homodimerization of ESR1 and suppresses its transcriptional activity and cell growth. Interacts with DNAAF4. Interacts with PRMT2. Interacts with RBFOX2. Interacts with EP300; the interaction is estrogen-dependent and enhanced by CITED1. Interacts with CITED1; the interaction is estrogen-dependent. Interacts with FAM120B, FOXL2, PHB2 and SLC30A9. Interacts with coactivators NCOA3 and NCOA6. Interacts with STK3/MST2 only in the presence of SAV1 and vice-versa. Binds to CSNK1D. Interacts with NCOA2; NCOA2 can interact with ESR1 AF-1 and AF-2 domains simultaneously and mediate their transcriptional synergy. Interacts with DDX5. Interacts with NCOA1; the interaction seems to require a self-association of N-terminal and C-terminal regions. Interacts with ZNF366, DDX17, NFKB1, RELA, SP1 and SP3. Interacts with NRIP1. Interacts with GPER1; the interaction occurs in an estrogen-dependent manner. Interacts with CLOCK and the interaction is stimulated by estrogen. Interacts with TRIP4 (ufmylated); estrogen dependent. Interacts with LMTK3; the interaction phosphorylates ESR1 (in vitro) and protects it against proteasomal degradation. Interacts with CCAR2 (via N-terminus) in a ligand-independent manner. Interacts with ZFHX3. Interacts with SFR1 in a ligand-dependent and -independent manner. Interacts with DCAF13, LATS1 and DCAF1; regulates ESR1 ubiquitination and ubiquitin-mediated proteasomal degradation. Interacts (via DNA-binding domain) with POU4F2 (C-terminus); this interaction increases the estrogen receptor ESR1 transcriptional activity in a DNA- and ligand 17-beta-estradiol-independent manner. Interacts with ESRRB isoform 1. Interacts with UBE3A and WBP2. Interacts with GTF2B. Interacts with RBM39. In the absence of hormonal ligand, interacts with TACC1 (By similarity). Interacts with PI3KR1 or PI3KR2 and PTK2/FAK1 (By similarity). Interacts with SRC (By similarity). Interacts with BAG1; the interaction is promoted in the absence of estradiol (17-beta-estradiol/E2) (By similarity). Interacts with and ubiquitinated by STUB1; the interaction is promoted in the absence of estradiol (17-beta-estradiol/E2) (By similarity). Interacts with NEDD8 (By similarity).</text>
</comment>
<comment type="subcellular location">
    <subcellularLocation>
        <location evidence="5">Nucleus</location>
    </subcellularLocation>
    <subcellularLocation>
        <location evidence="1">Cytoplasm</location>
    </subcellularLocation>
    <subcellularLocation>
        <location evidence="1">Golgi apparatus</location>
    </subcellularLocation>
    <subcellularLocation>
        <location evidence="1">Cell membrane</location>
    </subcellularLocation>
    <text evidence="1">Colocalizes with ZDHHC7 and ZDHHC21 in the Golgi apparatus where most probably palmitoylation occurs. Associated with the plasma membrane when palmitoylated.</text>
</comment>
<comment type="domain">
    <text evidence="1">Composed of three domains: a modulating N-terminal domain, a DNA-binding domain and a C-terminal ligand-binding domain. The modulating domain, also known as A/B or AF-1 domain has a ligand-independent transactivation function. The C-terminus contains a ligand-dependent transactivation domain, also known as E/F or AF-2 domain which overlaps with the ligand binding domain. AF-1 and AF-2 activate transcription independently and synergistically and act in a promoter- and cell-specific manner (By similarity).</text>
</comment>
<comment type="PTM">
    <text evidence="2 3">Ubiquitinated; regulated by LATS1 via DCAF1 it leads to ESR1 proteasomal degradation. Deubiquitinated by OTUB1 (By similarity). Ubiquitinated by STUB1/CHIP; in the CA1 hippocampal region following loss of endogenous circulating estradiol (17-beta-estradiol/E2) (By similarity). Ubiquitinated by UBR5, leading to its degradation: UBR5 specifically recognizes and binds ligand-bound ESR1 when it is not associated with coactivators (NCOAs). In presence of NCOAs, the UBR5-degron is not accessible, preventing its ubiquitination and degradation (By similarity).</text>
</comment>
<comment type="PTM">
    <text evidence="2">Phosphorylated by cyclin A/CDK2 and CK1. Phosphorylation probably enhances transcriptional activity. Dephosphorylation at Ser-118 by PPP5C inhibits its transactivation activity (By similarity). Phosphorylated by LMTK3 (in vitro) (By similarity).</text>
</comment>
<comment type="PTM">
    <text evidence="1">Palmitoylated at Cys-447 by ZDHHC7 and ZDHHC21. Palmitoylation is required for plasma membrane targeting and for rapid intracellular signaling via ERK and AKT kinases and cAMP generation, but not for signaling mediated by the nuclear hormone receptor (By similarity).</text>
</comment>
<comment type="PTM">
    <text evidence="2">Dimethylated by PRMT1 at Arg-260. The methylation may favor cytoplasmic localization. Demethylated by JMJD6 at Arg-260.</text>
</comment>
<comment type="similarity">
    <text evidence="8">Belongs to the nuclear hormone receptor family. NR3 subfamily.</text>
</comment>
<protein>
    <recommendedName>
        <fullName>Estrogen receptor</fullName>
        <shortName>ER</shortName>
    </recommendedName>
    <alternativeName>
        <fullName>ER-alpha</fullName>
    </alternativeName>
    <alternativeName>
        <fullName>Estradiol receptor</fullName>
    </alternativeName>
    <alternativeName>
        <fullName>Nuclear receptor subfamily 3 group A member 1</fullName>
    </alternativeName>
</protein>
<proteinExistence type="evidence at transcript level"/>
<sequence>MTMTLHTKASGMALLHQIQGNELETLNRPQLKIPLERPLGEVYVDGSKPAVYNYPEGAAYDFNAAAAASAPVYGQSGLAYGSGSEAAAFGANGLGGFPPLNSVSPSPLVLLHPPPQLSPFLHPHGQQVPYYLENEPSGYAVREAGPPAFYRPTSDNRRQSGRERLASTGDKGSMAMESAKETRYCAVCNDYASGYHYGVWSCEGCKAFFKRSIQGHNDYMCPATNQCTIDKNRRKSCQACRLRKCYEVGMMKGGIRKDRRGGRMLKHKRQRDEGEGRNEVGSSGDVRASNLWPSPLLIKHTKKNSPALSLTADQMVSALLEAEPPIIYSDYDPSRPFSEASMMGLLTNLADRELVHMINWAKRVPGFVDLSLHDQVHLLECAWLEILMIGLVWRSMEHPGKLLFAPNLLLDRNQGKCVEGMVEIFDMLLATSSRFRMMNLQGEEFVCLKSIILLNSGVYTFLSSTLKSLEEKDHIHRVLDKITDTLIHLMAKAGLSLQQQHRRLAQLLLILSHIRHMSNKGMEHLYNMKCKNVVPLYDLLLEMLDAHRLHAPANRGGAPMEEMNQSQLATTGSTSAHSLQAYYITEEAGAFPTTV</sequence>
<name>ESR1_FELCA</name>
<gene>
    <name type="primary">ESR1</name>
    <name type="synonym">ESR</name>
    <name type="synonym">NR3A1</name>
</gene>
<organism>
    <name type="scientific">Felis catus</name>
    <name type="common">Cat</name>
    <name type="synonym">Felis silvestris catus</name>
    <dbReference type="NCBI Taxonomy" id="9685"/>
    <lineage>
        <taxon>Eukaryota</taxon>
        <taxon>Metazoa</taxon>
        <taxon>Chordata</taxon>
        <taxon>Craniata</taxon>
        <taxon>Vertebrata</taxon>
        <taxon>Euteleostomi</taxon>
        <taxon>Mammalia</taxon>
        <taxon>Eutheria</taxon>
        <taxon>Laurasiatheria</taxon>
        <taxon>Carnivora</taxon>
        <taxon>Feliformia</taxon>
        <taxon>Felidae</taxon>
        <taxon>Felinae</taxon>
        <taxon>Felis</taxon>
    </lineage>
</organism>
<evidence type="ECO:0000250" key="1"/>
<evidence type="ECO:0000250" key="2">
    <source>
        <dbReference type="UniProtKB" id="P03372"/>
    </source>
</evidence>
<evidence type="ECO:0000250" key="3">
    <source>
        <dbReference type="UniProtKB" id="P06211"/>
    </source>
</evidence>
<evidence type="ECO:0000250" key="4">
    <source>
        <dbReference type="UniProtKB" id="P19785"/>
    </source>
</evidence>
<evidence type="ECO:0000255" key="5">
    <source>
        <dbReference type="PROSITE-ProRule" id="PRU00407"/>
    </source>
</evidence>
<evidence type="ECO:0000255" key="6">
    <source>
        <dbReference type="PROSITE-ProRule" id="PRU01189"/>
    </source>
</evidence>
<evidence type="ECO:0000256" key="7">
    <source>
        <dbReference type="SAM" id="MobiDB-lite"/>
    </source>
</evidence>
<evidence type="ECO:0000305" key="8"/>
<dbReference type="EMBL" id="AY605260">
    <property type="protein sequence ID" value="AAU11443.1"/>
    <property type="molecule type" value="mRNA"/>
</dbReference>
<dbReference type="RefSeq" id="NP_001019402.1">
    <property type="nucleotide sequence ID" value="NM_001024231.1"/>
</dbReference>
<dbReference type="SMR" id="Q53AD2"/>
<dbReference type="STRING" id="9685.ENSFCAP00000020448"/>
<dbReference type="GlyCosmos" id="Q53AD2">
    <property type="glycosylation" value="2 sites, No reported glycans"/>
</dbReference>
<dbReference type="PaxDb" id="9685-ENSFCAP00000020448"/>
<dbReference type="GeneID" id="552888"/>
<dbReference type="KEGG" id="fca:552888"/>
<dbReference type="CTD" id="2099"/>
<dbReference type="eggNOG" id="KOG3575">
    <property type="taxonomic scope" value="Eukaryota"/>
</dbReference>
<dbReference type="InParanoid" id="Q53AD2"/>
<dbReference type="OrthoDB" id="5799427at2759"/>
<dbReference type="Proteomes" id="UP000011712">
    <property type="component" value="Unplaced"/>
</dbReference>
<dbReference type="GO" id="GO:0000785">
    <property type="term" value="C:chromatin"/>
    <property type="evidence" value="ECO:0000318"/>
    <property type="project" value="GO_Central"/>
</dbReference>
<dbReference type="GO" id="GO:0005737">
    <property type="term" value="C:cytoplasm"/>
    <property type="evidence" value="ECO:0000250"/>
    <property type="project" value="UniProtKB"/>
</dbReference>
<dbReference type="GO" id="GO:0005794">
    <property type="term" value="C:Golgi apparatus"/>
    <property type="evidence" value="ECO:0007669"/>
    <property type="project" value="UniProtKB-SubCell"/>
</dbReference>
<dbReference type="GO" id="GO:0005634">
    <property type="term" value="C:nucleus"/>
    <property type="evidence" value="ECO:0000250"/>
    <property type="project" value="UniProtKB"/>
</dbReference>
<dbReference type="GO" id="GO:0005886">
    <property type="term" value="C:plasma membrane"/>
    <property type="evidence" value="ECO:0007669"/>
    <property type="project" value="UniProtKB-SubCell"/>
</dbReference>
<dbReference type="GO" id="GO:0034056">
    <property type="term" value="F:estrogen response element binding"/>
    <property type="evidence" value="ECO:0000318"/>
    <property type="project" value="GO_Central"/>
</dbReference>
<dbReference type="GO" id="GO:0030284">
    <property type="term" value="F:nuclear estrogen receptor activity"/>
    <property type="evidence" value="ECO:0007669"/>
    <property type="project" value="InterPro"/>
</dbReference>
<dbReference type="GO" id="GO:0004879">
    <property type="term" value="F:nuclear receptor activity"/>
    <property type="evidence" value="ECO:0000318"/>
    <property type="project" value="GO_Central"/>
</dbReference>
<dbReference type="GO" id="GO:0043565">
    <property type="term" value="F:sequence-specific DNA binding"/>
    <property type="evidence" value="ECO:0000250"/>
    <property type="project" value="UniProtKB"/>
</dbReference>
<dbReference type="GO" id="GO:0005496">
    <property type="term" value="F:steroid binding"/>
    <property type="evidence" value="ECO:0000250"/>
    <property type="project" value="UniProtKB"/>
</dbReference>
<dbReference type="GO" id="GO:0008270">
    <property type="term" value="F:zinc ion binding"/>
    <property type="evidence" value="ECO:0007669"/>
    <property type="project" value="UniProtKB-KW"/>
</dbReference>
<dbReference type="GO" id="GO:0071392">
    <property type="term" value="P:cellular response to estradiol stimulus"/>
    <property type="evidence" value="ECO:0000250"/>
    <property type="project" value="UniProtKB"/>
</dbReference>
<dbReference type="GO" id="GO:0071391">
    <property type="term" value="P:cellular response to estrogen stimulus"/>
    <property type="evidence" value="ECO:0000318"/>
    <property type="project" value="GO_Central"/>
</dbReference>
<dbReference type="GO" id="GO:0030520">
    <property type="term" value="P:estrogen receptor signaling pathway"/>
    <property type="evidence" value="ECO:0000318"/>
    <property type="project" value="GO_Central"/>
</dbReference>
<dbReference type="GO" id="GO:0043124">
    <property type="term" value="P:negative regulation of canonical NF-kappaB signal transduction"/>
    <property type="evidence" value="ECO:0000250"/>
    <property type="project" value="UniProtKB"/>
</dbReference>
<dbReference type="GO" id="GO:0043433">
    <property type="term" value="P:negative regulation of DNA-binding transcription factor activity"/>
    <property type="evidence" value="ECO:0000250"/>
    <property type="project" value="UniProtKB"/>
</dbReference>
<dbReference type="GO" id="GO:0034392">
    <property type="term" value="P:negative regulation of smooth muscle cell apoptotic process"/>
    <property type="evidence" value="ECO:0000250"/>
    <property type="project" value="UniProtKB"/>
</dbReference>
<dbReference type="GO" id="GO:0030518">
    <property type="term" value="P:nuclear receptor-mediated steroid hormone signaling pathway"/>
    <property type="evidence" value="ECO:0000250"/>
    <property type="project" value="UniProtKB"/>
</dbReference>
<dbReference type="GO" id="GO:0007200">
    <property type="term" value="P:phospholipase C-activating G protein-coupled receptor signaling pathway"/>
    <property type="evidence" value="ECO:0000250"/>
    <property type="project" value="UniProtKB"/>
</dbReference>
<dbReference type="GO" id="GO:0007204">
    <property type="term" value="P:positive regulation of cytosolic calcium ion concentration"/>
    <property type="evidence" value="ECO:0000250"/>
    <property type="project" value="UniProtKB"/>
</dbReference>
<dbReference type="GO" id="GO:0051091">
    <property type="term" value="P:positive regulation of DNA-binding transcription factor activity"/>
    <property type="evidence" value="ECO:0000250"/>
    <property type="project" value="UniProtKB"/>
</dbReference>
<dbReference type="GO" id="GO:0045893">
    <property type="term" value="P:positive regulation of DNA-templated transcription"/>
    <property type="evidence" value="ECO:0000250"/>
    <property type="project" value="UniProtKB"/>
</dbReference>
<dbReference type="GO" id="GO:0045429">
    <property type="term" value="P:positive regulation of nitric oxide biosynthetic process"/>
    <property type="evidence" value="ECO:0000250"/>
    <property type="project" value="UniProtKB"/>
</dbReference>
<dbReference type="GO" id="GO:0051000">
    <property type="term" value="P:positive regulation of nitric-oxide synthase activity"/>
    <property type="evidence" value="ECO:0000250"/>
    <property type="project" value="UniProtKB"/>
</dbReference>
<dbReference type="GO" id="GO:0006357">
    <property type="term" value="P:regulation of transcription by RNA polymerase II"/>
    <property type="evidence" value="ECO:0000318"/>
    <property type="project" value="GO_Central"/>
</dbReference>
<dbReference type="CDD" id="cd07171">
    <property type="entry name" value="NR_DBD_ER"/>
    <property type="match status" value="1"/>
</dbReference>
<dbReference type="CDD" id="cd06949">
    <property type="entry name" value="NR_LBD_ER"/>
    <property type="match status" value="1"/>
</dbReference>
<dbReference type="FunFam" id="1.10.565.10:FF:000010">
    <property type="entry name" value="Estrogen receptor"/>
    <property type="match status" value="1"/>
</dbReference>
<dbReference type="FunFam" id="3.30.50.10:FF:000014">
    <property type="entry name" value="Estrogen receptor beta"/>
    <property type="match status" value="1"/>
</dbReference>
<dbReference type="Gene3D" id="3.30.50.10">
    <property type="entry name" value="Erythroid Transcription Factor GATA-1, subunit A"/>
    <property type="match status" value="1"/>
</dbReference>
<dbReference type="Gene3D" id="1.10.565.10">
    <property type="entry name" value="Retinoid X Receptor"/>
    <property type="match status" value="1"/>
</dbReference>
<dbReference type="InterPro" id="IPR024178">
    <property type="entry name" value="Est_rcpt/est-rel_rcp"/>
</dbReference>
<dbReference type="InterPro" id="IPR001292">
    <property type="entry name" value="Estr_rcpt"/>
</dbReference>
<dbReference type="InterPro" id="IPR046944">
    <property type="entry name" value="Estr_rcpt_N"/>
</dbReference>
<dbReference type="InterPro" id="IPR035500">
    <property type="entry name" value="NHR-like_dom_sf"/>
</dbReference>
<dbReference type="InterPro" id="IPR000536">
    <property type="entry name" value="Nucl_hrmn_rcpt_lig-bd"/>
</dbReference>
<dbReference type="InterPro" id="IPR050200">
    <property type="entry name" value="Nuclear_hormone_rcpt_NR3"/>
</dbReference>
<dbReference type="InterPro" id="IPR001723">
    <property type="entry name" value="Nuclear_hrmn_rcpt"/>
</dbReference>
<dbReference type="InterPro" id="IPR024736">
    <property type="entry name" value="Oestrogen-typ_rcpt_final_C_dom"/>
</dbReference>
<dbReference type="InterPro" id="IPR001628">
    <property type="entry name" value="Znf_hrmn_rcpt"/>
</dbReference>
<dbReference type="InterPro" id="IPR013088">
    <property type="entry name" value="Znf_NHR/GATA"/>
</dbReference>
<dbReference type="PANTHER" id="PTHR48092">
    <property type="entry name" value="KNIRPS-RELATED PROTEIN-RELATED"/>
    <property type="match status" value="1"/>
</dbReference>
<dbReference type="Pfam" id="PF12743">
    <property type="entry name" value="ESR1_C"/>
    <property type="match status" value="1"/>
</dbReference>
<dbReference type="Pfam" id="PF00104">
    <property type="entry name" value="Hormone_recep"/>
    <property type="match status" value="1"/>
</dbReference>
<dbReference type="Pfam" id="PF02159">
    <property type="entry name" value="Oest_recep"/>
    <property type="match status" value="1"/>
</dbReference>
<dbReference type="Pfam" id="PF00105">
    <property type="entry name" value="zf-C4"/>
    <property type="match status" value="1"/>
</dbReference>
<dbReference type="PIRSF" id="PIRSF500101">
    <property type="entry name" value="ER-a"/>
    <property type="match status" value="1"/>
</dbReference>
<dbReference type="PIRSF" id="PIRSF002527">
    <property type="entry name" value="ER-like_NR"/>
    <property type="match status" value="1"/>
</dbReference>
<dbReference type="PRINTS" id="PR00543">
    <property type="entry name" value="OESTROGENR"/>
</dbReference>
<dbReference type="PRINTS" id="PR00398">
    <property type="entry name" value="STRDHORMONER"/>
</dbReference>
<dbReference type="PRINTS" id="PR00047">
    <property type="entry name" value="STROIDFINGER"/>
</dbReference>
<dbReference type="SMART" id="SM00430">
    <property type="entry name" value="HOLI"/>
    <property type="match status" value="1"/>
</dbReference>
<dbReference type="SMART" id="SM00399">
    <property type="entry name" value="ZnF_C4"/>
    <property type="match status" value="1"/>
</dbReference>
<dbReference type="SUPFAM" id="SSF57716">
    <property type="entry name" value="Glucocorticoid receptor-like (DNA-binding domain)"/>
    <property type="match status" value="1"/>
</dbReference>
<dbReference type="SUPFAM" id="SSF48508">
    <property type="entry name" value="Nuclear receptor ligand-binding domain"/>
    <property type="match status" value="1"/>
</dbReference>
<dbReference type="PROSITE" id="PS51843">
    <property type="entry name" value="NR_LBD"/>
    <property type="match status" value="1"/>
</dbReference>
<dbReference type="PROSITE" id="PS00031">
    <property type="entry name" value="NUCLEAR_REC_DBD_1"/>
    <property type="match status" value="1"/>
</dbReference>
<dbReference type="PROSITE" id="PS51030">
    <property type="entry name" value="NUCLEAR_REC_DBD_2"/>
    <property type="match status" value="1"/>
</dbReference>
<feature type="chain" id="PRO_0000226725" description="Estrogen receptor">
    <location>
        <begin position="1"/>
        <end position="595"/>
    </location>
</feature>
<feature type="domain" description="NR LBD" evidence="6">
    <location>
        <begin position="311"/>
        <end position="547"/>
    </location>
</feature>
<feature type="DNA-binding region" description="Nuclear receptor" evidence="5">
    <location>
        <begin position="185"/>
        <end position="250"/>
    </location>
</feature>
<feature type="zinc finger region" description="NR C4-type" evidence="5">
    <location>
        <begin position="185"/>
        <end position="205"/>
    </location>
</feature>
<feature type="zinc finger region" description="NR C4-type" evidence="5">
    <location>
        <begin position="221"/>
        <end position="245"/>
    </location>
</feature>
<feature type="region of interest" description="Modulating (transactivation AF-1); mediates interaction with MACROD1" evidence="1">
    <location>
        <begin position="1"/>
        <end position="184"/>
    </location>
</feature>
<feature type="region of interest" description="Interaction with DDX5; self-association" evidence="1">
    <location>
        <begin position="35"/>
        <end position="174"/>
    </location>
</feature>
<feature type="region of interest" description="Required for interaction with NCOA1" evidence="1">
    <location>
        <begin position="35"/>
        <end position="47"/>
    </location>
</feature>
<feature type="region of interest" description="Disordered" evidence="7">
    <location>
        <begin position="149"/>
        <end position="173"/>
    </location>
</feature>
<feature type="region of interest" description="Mediates interaction with DNTTIP2" evidence="1">
    <location>
        <begin position="185"/>
        <end position="310"/>
    </location>
</feature>
<feature type="region of interest" description="Hinge">
    <location>
        <begin position="251"/>
        <end position="310"/>
    </location>
</feature>
<feature type="region of interest" description="Disordered" evidence="7">
    <location>
        <begin position="257"/>
        <end position="287"/>
    </location>
</feature>
<feature type="region of interest" description="Interaction with AKAP13" evidence="1">
    <location>
        <begin position="262"/>
        <end position="595"/>
    </location>
</feature>
<feature type="region of interest" description="Self-association" evidence="1">
    <location>
        <begin position="264"/>
        <end position="595"/>
    </location>
</feature>
<feature type="region of interest" description="Transactivation AF-2" evidence="1">
    <location>
        <begin position="311"/>
        <end position="595"/>
    </location>
</feature>
<feature type="compositionally biased region" description="Basic and acidic residues" evidence="7">
    <location>
        <begin position="154"/>
        <end position="165"/>
    </location>
</feature>
<feature type="compositionally biased region" description="Basic residues" evidence="7">
    <location>
        <begin position="257"/>
        <end position="269"/>
    </location>
</feature>
<feature type="binding site" evidence="2">
    <location>
        <position position="353"/>
    </location>
    <ligand>
        <name>17beta-estradiol</name>
        <dbReference type="ChEBI" id="CHEBI:16469"/>
    </ligand>
</feature>
<feature type="binding site" evidence="2">
    <location>
        <position position="394"/>
    </location>
    <ligand>
        <name>17beta-estradiol</name>
        <dbReference type="ChEBI" id="CHEBI:16469"/>
    </ligand>
</feature>
<feature type="binding site" evidence="2">
    <location>
        <position position="524"/>
    </location>
    <ligand>
        <name>17beta-estradiol</name>
        <dbReference type="ChEBI" id="CHEBI:16469"/>
    </ligand>
</feature>
<feature type="modified residue" description="Phosphoserine; by CDK2" evidence="2">
    <location>
        <position position="104"/>
    </location>
</feature>
<feature type="modified residue" description="Phosphoserine; by CDK2" evidence="2">
    <location>
        <position position="106"/>
    </location>
</feature>
<feature type="modified residue" description="Phosphoserine" evidence="2">
    <location>
        <position position="118"/>
    </location>
</feature>
<feature type="modified residue" description="Phosphoserine; by CK2" evidence="2">
    <location>
        <position position="167"/>
    </location>
</feature>
<feature type="modified residue" description="Asymmetric dimethylarginine; by PRMT1" evidence="2">
    <location>
        <position position="260"/>
    </location>
</feature>
<feature type="modified residue" description="Phosphotyrosine; by Tyr-kinases" evidence="2">
    <location>
        <position position="537"/>
    </location>
</feature>
<feature type="lipid moiety-binding region" description="S-palmitoyl cysteine" evidence="1">
    <location>
        <position position="447"/>
    </location>
</feature>
<feature type="glycosylation site" description="O-linked (GlcNAc) serine" evidence="1">
    <location>
        <position position="10"/>
    </location>
</feature>
<feature type="glycosylation site" description="O-linked (GlcNAc) threonine" evidence="1">
    <location>
        <position position="571"/>
    </location>
</feature>
<accession>Q53AD2</accession>
<keyword id="KW-0010">Activator</keyword>
<keyword id="KW-1003">Cell membrane</keyword>
<keyword id="KW-0963">Cytoplasm</keyword>
<keyword id="KW-0238">DNA-binding</keyword>
<keyword id="KW-0325">Glycoprotein</keyword>
<keyword id="KW-0333">Golgi apparatus</keyword>
<keyword id="KW-0446">Lipid-binding</keyword>
<keyword id="KW-0449">Lipoprotein</keyword>
<keyword id="KW-0472">Membrane</keyword>
<keyword id="KW-0479">Metal-binding</keyword>
<keyword id="KW-0488">Methylation</keyword>
<keyword id="KW-0539">Nucleus</keyword>
<keyword id="KW-0564">Palmitate</keyword>
<keyword id="KW-0597">Phosphoprotein</keyword>
<keyword id="KW-0675">Receptor</keyword>
<keyword id="KW-1185">Reference proteome</keyword>
<keyword id="KW-0754">Steroid-binding</keyword>
<keyword id="KW-0804">Transcription</keyword>
<keyword id="KW-0805">Transcription regulation</keyword>
<keyword id="KW-0832">Ubl conjugation</keyword>
<keyword id="KW-0862">Zinc</keyword>
<keyword id="KW-0863">Zinc-finger</keyword>